<protein>
    <recommendedName>
        <fullName evidence="7">UstYa family oxidase phomYe</fullName>
        <ecNumber evidence="9">1.-.-.-</ecNumber>
    </recommendedName>
    <alternativeName>
        <fullName evidence="7">Phomopsin biosynthesis cluster protein Ye</fullName>
    </alternativeName>
</protein>
<sequence length="285" mass="31637">MGHRQSVDYTSIPPSELDAHERLPRRKSRFDLFYGWKGIAFLSTLTNVLFISGFFYFGTHLFSPSSSFGHEECHLGSERLWERPVPWKKVVLENHQEFVDGDPWDSKFAGDGTSSNGGAPSPWDSVWLPNWVALENDPAAQGYGFGTPLTGPGSEGNEHDPTPWTPGSQAFGLAVMHQLHCVASIKKAINDYRYTGGHRGSNSSANIGHVDHCVEVLRQATMCHGDMSLIRPNVKGHSYTGYDGWGNEHLCRDWEAIEDIVREHGISFVKGAGMQGWTHLKKGVS</sequence>
<proteinExistence type="inferred from homology"/>
<accession>A0A142I739</accession>
<name>PHOYE_DIALO</name>
<keyword id="KW-0325">Glycoprotein</keyword>
<keyword id="KW-0472">Membrane</keyword>
<keyword id="KW-0560">Oxidoreductase</keyword>
<keyword id="KW-0812">Transmembrane</keyword>
<keyword id="KW-1133">Transmembrane helix</keyword>
<keyword id="KW-0843">Virulence</keyword>
<dbReference type="EC" id="1.-.-.-" evidence="9"/>
<dbReference type="EMBL" id="KU645843">
    <property type="protein sequence ID" value="AMR44291.1"/>
    <property type="molecule type" value="Genomic_DNA"/>
</dbReference>
<dbReference type="EMBL" id="LC646903">
    <property type="protein sequence ID" value="BDA39152.1"/>
    <property type="molecule type" value="Genomic_DNA"/>
</dbReference>
<dbReference type="GO" id="GO:0016020">
    <property type="term" value="C:membrane"/>
    <property type="evidence" value="ECO:0007669"/>
    <property type="project" value="UniProtKB-SubCell"/>
</dbReference>
<dbReference type="GO" id="GO:0016491">
    <property type="term" value="F:oxidoreductase activity"/>
    <property type="evidence" value="ECO:0007669"/>
    <property type="project" value="UniProtKB-KW"/>
</dbReference>
<dbReference type="GO" id="GO:0043386">
    <property type="term" value="P:mycotoxin biosynthetic process"/>
    <property type="evidence" value="ECO:0007669"/>
    <property type="project" value="InterPro"/>
</dbReference>
<dbReference type="InterPro" id="IPR021765">
    <property type="entry name" value="UstYa-like"/>
</dbReference>
<dbReference type="PANTHER" id="PTHR33365:SF4">
    <property type="entry name" value="CYCLOCHLOROTINE BIOSYNTHESIS PROTEIN O"/>
    <property type="match status" value="1"/>
</dbReference>
<dbReference type="PANTHER" id="PTHR33365">
    <property type="entry name" value="YALI0B05434P"/>
    <property type="match status" value="1"/>
</dbReference>
<dbReference type="Pfam" id="PF11807">
    <property type="entry name" value="UstYa"/>
    <property type="match status" value="1"/>
</dbReference>
<feature type="chain" id="PRO_0000458342" description="UstYa family oxidase phomYe">
    <location>
        <begin position="1"/>
        <end position="285"/>
    </location>
</feature>
<feature type="transmembrane region" description="Helical" evidence="2">
    <location>
        <begin position="32"/>
        <end position="54"/>
    </location>
</feature>
<feature type="region of interest" description="Disordered" evidence="4">
    <location>
        <begin position="143"/>
        <end position="165"/>
    </location>
</feature>
<feature type="short sequence motif" description="HXXHC 1" evidence="1">
    <location>
        <begin position="177"/>
        <end position="181"/>
    </location>
</feature>
<feature type="short sequence motif" description="HXXHC 2" evidence="1">
    <location>
        <begin position="209"/>
        <end position="213"/>
    </location>
</feature>
<feature type="glycosylation site" description="N-linked (GlcNAc...) asparagine" evidence="3">
    <location>
        <position position="202"/>
    </location>
</feature>
<organism>
    <name type="scientific">Diaporthe leptostromiformis</name>
    <name type="common">Lupinosis disease fungus</name>
    <name type="synonym">Phomopsis leptostromiformis</name>
    <dbReference type="NCBI Taxonomy" id="291059"/>
    <lineage>
        <taxon>Eukaryota</taxon>
        <taxon>Fungi</taxon>
        <taxon>Dikarya</taxon>
        <taxon>Ascomycota</taxon>
        <taxon>Pezizomycotina</taxon>
        <taxon>Sordariomycetes</taxon>
        <taxon>Sordariomycetidae</taxon>
        <taxon>Diaporthales</taxon>
        <taxon>Diaporthaceae</taxon>
        <taxon>Diaporthe</taxon>
    </lineage>
</organism>
<gene>
    <name evidence="6" type="primary">phomYe</name>
</gene>
<evidence type="ECO:0000250" key="1">
    <source>
        <dbReference type="UniProtKB" id="B8NM67"/>
    </source>
</evidence>
<evidence type="ECO:0000255" key="2"/>
<evidence type="ECO:0000255" key="3">
    <source>
        <dbReference type="PROSITE-ProRule" id="PRU00498"/>
    </source>
</evidence>
<evidence type="ECO:0000256" key="4">
    <source>
        <dbReference type="SAM" id="MobiDB-lite"/>
    </source>
</evidence>
<evidence type="ECO:0000269" key="5">
    <source>
    </source>
</evidence>
<evidence type="ECO:0000303" key="6">
    <source>
    </source>
</evidence>
<evidence type="ECO:0000303" key="7">
    <source>
    </source>
</evidence>
<evidence type="ECO:0000305" key="8"/>
<evidence type="ECO:0000305" key="9">
    <source>
    </source>
</evidence>
<comment type="function">
    <text evidence="5 9">UstYa family oxidase; part of the gene cluster that mediates the biosynthesis of the phomopsins, a group of hexapeptide mycotoxins which infects lupins and causes lupinosis disease in livestock (PubMed:34608734). Within the pathway, phomYe catalyzes the desaturation of the Pro moiety into 3,4-dehydroproline (dPro) (PubMed:34608734). The pathway starts with the processing of the precursor phomA by several endopeptidases including kexin proteases as well as the cluster-specific S41 family peptidase phomP1 and the oligopeptidase phomG to produce 10 identical copies of the hexapeptide Tyr-Val-Ile-Pro-Ile-Asp. After being excised from the precursor peptide, the core peptides are cyclized and modified post-translationally by enzymes encoded within the gene cluster. The timing and order of proteolysis of the phomA precursor and PTMs are still unknown. Two tyrosinase-like enzymes, phomQ1 and phomQ2, catalyze the chlorination and hydroxylation of Tyr, respectively. PhomYb, is proposed to be involved in the construction of the macrocyclic structure. The other 4 ustYa family proteins may be involved in PTMs that generate the unique structure of phomopsin A. PhomYa is required for the hydroxylation of C-beta of Tyr. PhomYc, phomYd, and phomYe are responsible for the biosynthesis of 2,3-dehydroisoleucine (dIle), 2,3-dehydroaspartic acid (dAsp), and 3,4-dehydroproline (dPro), respectively. While dIle formation by phomYc is indispensable for the installation of dAsp by phomYd, the order of the other PTMs have not been elucidated yet. Most of the biosynthetic enzymes likely have broad substrate specificity, and thus, there might be a metabolic grid from a precursor to phomopsin A. The enzyme(s) responsible for the biosynthesis of 3,4-dehydrovaline (dVal) have also not been identified yet. Finally, phomM acts as an S-adenosylmethionine-dependent alpha-N-methyltransferase that catalyzes two successive N-methylation reactions, converting N-desmethyl-phomopsin A to phomopsin A and phomopsin A further to an N,N-dimethylated congener called phomopsin E (Probable).</text>
</comment>
<comment type="pathway">
    <text evidence="5">Mycotoxin biosynthesis.</text>
</comment>
<comment type="subcellular location">
    <subcellularLocation>
        <location evidence="2">Membrane</location>
        <topology evidence="2">Single-pass membrane protein</topology>
    </subcellularLocation>
</comment>
<comment type="domain">
    <text evidence="1">The 2 HXXHC motifs are conserved in ustYa family proteins and might form active sites.</text>
</comment>
<comment type="disruption phenotype">
    <text evidence="5">Abolishes the formation of phomopsin A and leads to the accumulation an intermediate with no modified Pro moiety.</text>
</comment>
<comment type="similarity">
    <text evidence="8">Belongs to the ustYa family.</text>
</comment>
<reference key="1">
    <citation type="journal article" date="2016" name="Proc. Natl. Acad. Sci. U.S.A.">
        <title>Biosynthetic investigation of phomopsins reveals a widespread pathway for ribosomal natural products in Ascomycetes.</title>
        <authorList>
            <person name="Ding W."/>
            <person name="Liu W.Q."/>
            <person name="Jia Y."/>
            <person name="Li Y."/>
            <person name="van der Donk W.A."/>
            <person name="Zhang Q."/>
        </authorList>
    </citation>
    <scope>NUCLEOTIDE SEQUENCE [GENOMIC DNA]</scope>
    <scope>FUNCTION</scope>
    <source>
        <strain>ATCC 26115 / IMI 115107 / C 1557</strain>
    </source>
</reference>
<reference key="2">
    <citation type="journal article" date="2021" name="Angew. Chem. Int. Ed.">
        <title>Biosynthetic studies of phomopsins unveil posttranslational installation of dehydroamino acids by ustYa family proteins.</title>
        <authorList>
            <person name="Sogahata K."/>
            <person name="Ozaki T."/>
            <person name="Igarashi Y."/>
            <person name="Naganuma Y."/>
            <person name="Liu C."/>
            <person name="Minami A."/>
            <person name="Oikawa H."/>
        </authorList>
    </citation>
    <scope>NUCLEOTIDE SEQUENCE [GENOMIC DNA]</scope>
    <scope>FUNCTION</scope>
    <scope>DISRUPTION PHENOTYPE</scope>
    <source>
        <strain>ATCC 26115 / IMI 115107 / C 1557</strain>
    </source>
</reference>